<feature type="initiator methionine" description="Removed" evidence="2">
    <location>
        <position position="1"/>
    </location>
</feature>
<feature type="chain" id="PRO_0000250409" description="Small ribosomal subunit protein eS27">
    <location>
        <begin position="2"/>
        <end position="83"/>
    </location>
</feature>
<feature type="zinc finger region" description="C4-type" evidence="1">
    <location>
        <begin position="37"/>
        <end position="59"/>
    </location>
</feature>
<dbReference type="EMBL" id="FO081492">
    <property type="protein sequence ID" value="CCD71974.1"/>
    <property type="molecule type" value="Genomic_DNA"/>
</dbReference>
<dbReference type="PIR" id="G88921">
    <property type="entry name" value="G88921"/>
</dbReference>
<dbReference type="RefSeq" id="NP_001370756.1">
    <property type="nucleotide sequence ID" value="NM_001383266.2"/>
</dbReference>
<dbReference type="RefSeq" id="NP_503134.1">
    <property type="nucleotide sequence ID" value="NM_070733.5"/>
</dbReference>
<dbReference type="PDB" id="9BH5">
    <property type="method" value="EM"/>
    <property type="resolution" value="2.63 A"/>
    <property type="chains" value="Ab=1-83"/>
</dbReference>
<dbReference type="PDB" id="9CAI">
    <property type="method" value="EM"/>
    <property type="resolution" value="2.59 A"/>
    <property type="chains" value="Ab=1-83"/>
</dbReference>
<dbReference type="PDBsum" id="9BH5"/>
<dbReference type="PDBsum" id="9CAI"/>
<dbReference type="EMDB" id="EMD-44533"/>
<dbReference type="EMDB" id="EMD-45392"/>
<dbReference type="SMR" id="Q9TXP0"/>
<dbReference type="BioGRID" id="43613">
    <property type="interactions" value="99"/>
</dbReference>
<dbReference type="FunCoup" id="Q9TXP0">
    <property type="interactions" value="1571"/>
</dbReference>
<dbReference type="STRING" id="6239.F56E10.4.1"/>
<dbReference type="PaxDb" id="6239-F56E10.4.1"/>
<dbReference type="PeptideAtlas" id="Q9TXP0"/>
<dbReference type="EnsemblMetazoa" id="F56E10.4.1">
    <property type="protein sequence ID" value="F56E10.4.1"/>
    <property type="gene ID" value="WBGene00004496"/>
</dbReference>
<dbReference type="EnsemblMetazoa" id="F56E10.4.2">
    <property type="protein sequence ID" value="F56E10.4.2"/>
    <property type="gene ID" value="WBGene00004496"/>
</dbReference>
<dbReference type="GeneID" id="178538"/>
<dbReference type="UCSC" id="F56E10.4.1">
    <property type="organism name" value="c. elegans"/>
</dbReference>
<dbReference type="AGR" id="WB:WBGene00004496"/>
<dbReference type="WormBase" id="F56E10.4">
    <property type="protein sequence ID" value="CE19904"/>
    <property type="gene ID" value="WBGene00004496"/>
    <property type="gene designation" value="rps-27"/>
</dbReference>
<dbReference type="eggNOG" id="KOG1779">
    <property type="taxonomic scope" value="Eukaryota"/>
</dbReference>
<dbReference type="GeneTree" id="ENSGT00940000167938"/>
<dbReference type="HOGENOM" id="CLU_130128_3_0_1"/>
<dbReference type="InParanoid" id="Q9TXP0"/>
<dbReference type="OMA" id="YQDEWET"/>
<dbReference type="OrthoDB" id="5567124at2759"/>
<dbReference type="PhylomeDB" id="Q9TXP0"/>
<dbReference type="Reactome" id="R-CEL-156827">
    <property type="pathway name" value="L13a-mediated translational silencing of Ceruloplasmin expression"/>
</dbReference>
<dbReference type="Reactome" id="R-CEL-1799339">
    <property type="pathway name" value="SRP-dependent cotranslational protein targeting to membrane"/>
</dbReference>
<dbReference type="Reactome" id="R-CEL-72649">
    <property type="pathway name" value="Translation initiation complex formation"/>
</dbReference>
<dbReference type="Reactome" id="R-CEL-72689">
    <property type="pathway name" value="Formation of a pool of free 40S subunits"/>
</dbReference>
<dbReference type="Reactome" id="R-CEL-72695">
    <property type="pathway name" value="Formation of the ternary complex, and subsequently, the 43S complex"/>
</dbReference>
<dbReference type="Reactome" id="R-CEL-72702">
    <property type="pathway name" value="Ribosomal scanning and start codon recognition"/>
</dbReference>
<dbReference type="Reactome" id="R-CEL-72706">
    <property type="pathway name" value="GTP hydrolysis and joining of the 60S ribosomal subunit"/>
</dbReference>
<dbReference type="Reactome" id="R-CEL-975956">
    <property type="pathway name" value="Nonsense Mediated Decay (NMD) independent of the Exon Junction Complex (EJC)"/>
</dbReference>
<dbReference type="Reactome" id="R-CEL-975957">
    <property type="pathway name" value="Nonsense Mediated Decay (NMD) enhanced by the Exon Junction Complex (EJC)"/>
</dbReference>
<dbReference type="PRO" id="PR:Q9TXP0"/>
<dbReference type="Proteomes" id="UP000001940">
    <property type="component" value="Chromosome V"/>
</dbReference>
<dbReference type="Bgee" id="WBGene00004496">
    <property type="expression patterns" value="Expressed in pharyngeal muscle cell (C elegans) and 4 other cell types or tissues"/>
</dbReference>
<dbReference type="GO" id="GO:0022627">
    <property type="term" value="C:cytosolic small ribosomal subunit"/>
    <property type="evidence" value="ECO:0000318"/>
    <property type="project" value="GO_Central"/>
</dbReference>
<dbReference type="GO" id="GO:0003723">
    <property type="term" value="F:RNA binding"/>
    <property type="evidence" value="ECO:0000318"/>
    <property type="project" value="GO_Central"/>
</dbReference>
<dbReference type="GO" id="GO:0003735">
    <property type="term" value="F:structural constituent of ribosome"/>
    <property type="evidence" value="ECO:0000318"/>
    <property type="project" value="GO_Central"/>
</dbReference>
<dbReference type="GO" id="GO:0008270">
    <property type="term" value="F:zinc ion binding"/>
    <property type="evidence" value="ECO:0007669"/>
    <property type="project" value="UniProtKB-KW"/>
</dbReference>
<dbReference type="GO" id="GO:0000028">
    <property type="term" value="P:ribosomal small subunit assembly"/>
    <property type="evidence" value="ECO:0000318"/>
    <property type="project" value="GO_Central"/>
</dbReference>
<dbReference type="GO" id="GO:0006412">
    <property type="term" value="P:translation"/>
    <property type="evidence" value="ECO:0007669"/>
    <property type="project" value="InterPro"/>
</dbReference>
<dbReference type="FunFam" id="2.20.25.100:FF:000001">
    <property type="entry name" value="40S ribosomal protein S27"/>
    <property type="match status" value="1"/>
</dbReference>
<dbReference type="Gene3D" id="2.20.25.100">
    <property type="entry name" value="Zn-binding ribosomal proteins"/>
    <property type="match status" value="1"/>
</dbReference>
<dbReference type="HAMAP" id="MF_00371">
    <property type="entry name" value="Ribosomal_eS27"/>
    <property type="match status" value="1"/>
</dbReference>
<dbReference type="InterPro" id="IPR000592">
    <property type="entry name" value="Ribosomal_eS27"/>
</dbReference>
<dbReference type="InterPro" id="IPR023407">
    <property type="entry name" value="Ribosomal_eS27_Zn-bd_dom_sf"/>
</dbReference>
<dbReference type="InterPro" id="IPR011332">
    <property type="entry name" value="Ribosomal_zn-bd"/>
</dbReference>
<dbReference type="PANTHER" id="PTHR11594">
    <property type="entry name" value="40S RIBOSOMAL PROTEIN S27"/>
    <property type="match status" value="1"/>
</dbReference>
<dbReference type="Pfam" id="PF01667">
    <property type="entry name" value="Ribosomal_S27e"/>
    <property type="match status" value="1"/>
</dbReference>
<dbReference type="SUPFAM" id="SSF57829">
    <property type="entry name" value="Zn-binding ribosomal proteins"/>
    <property type="match status" value="1"/>
</dbReference>
<gene>
    <name type="primary">rps-27</name>
    <name type="ORF">F56E10.4</name>
</gene>
<proteinExistence type="evidence at protein level"/>
<accession>Q9TXP0</accession>
<protein>
    <recommendedName>
        <fullName evidence="3">Small ribosomal subunit protein eS27</fullName>
    </recommendedName>
    <alternativeName>
        <fullName>40S ribosomal protein S27</fullName>
    </alternativeName>
</protein>
<evidence type="ECO:0000255" key="1"/>
<evidence type="ECO:0000269" key="2">
    <source ref="2"/>
</evidence>
<evidence type="ECO:0000305" key="3"/>
<comment type="cofactor">
    <cofactor evidence="1">
        <name>Zn(2+)</name>
        <dbReference type="ChEBI" id="CHEBI:29105"/>
    </cofactor>
    <text evidence="1">Binds 1 zinc ion per subunit.</text>
</comment>
<comment type="similarity">
    <text evidence="1">Belongs to the eukaryotic ribosomal protein eS27 family.</text>
</comment>
<name>RS27_CAEEL</name>
<sequence length="83" mass="9347">MPLAVDLLHPEPQREIRCHKLKRLVQHPNSYFMDVKCSGCFKISTVFSHATTVVVCVGCNTVLCQPTRGKAKLTEGCSFRKKQ</sequence>
<reference key="1">
    <citation type="journal article" date="1998" name="Science">
        <title>Genome sequence of the nematode C. elegans: a platform for investigating biology.</title>
        <authorList>
            <consortium name="The C. elegans sequencing consortium"/>
        </authorList>
    </citation>
    <scope>NUCLEOTIDE SEQUENCE [LARGE SCALE GENOMIC DNA]</scope>
    <source>
        <strain>Bristol N2</strain>
    </source>
</reference>
<reference key="2">
    <citation type="submission" date="2006-08" db="UniProtKB">
        <authorList>
            <person name="Bienvenut W.V."/>
        </authorList>
    </citation>
    <scope>PROTEIN SEQUENCE OF 2-14</scope>
    <scope>IDENTIFICATION BY MASS SPECTROMETRY</scope>
</reference>
<organism>
    <name type="scientific">Caenorhabditis elegans</name>
    <dbReference type="NCBI Taxonomy" id="6239"/>
    <lineage>
        <taxon>Eukaryota</taxon>
        <taxon>Metazoa</taxon>
        <taxon>Ecdysozoa</taxon>
        <taxon>Nematoda</taxon>
        <taxon>Chromadorea</taxon>
        <taxon>Rhabditida</taxon>
        <taxon>Rhabditina</taxon>
        <taxon>Rhabditomorpha</taxon>
        <taxon>Rhabditoidea</taxon>
        <taxon>Rhabditidae</taxon>
        <taxon>Peloderinae</taxon>
        <taxon>Caenorhabditis</taxon>
    </lineage>
</organism>
<keyword id="KW-0002">3D-structure</keyword>
<keyword id="KW-0903">Direct protein sequencing</keyword>
<keyword id="KW-0479">Metal-binding</keyword>
<keyword id="KW-1185">Reference proteome</keyword>
<keyword id="KW-0687">Ribonucleoprotein</keyword>
<keyword id="KW-0689">Ribosomal protein</keyword>
<keyword id="KW-0862">Zinc</keyword>
<keyword id="KW-0863">Zinc-finger</keyword>